<reference key="1">
    <citation type="journal article" date="1998" name="EMBO J.">
        <title>DPM2 regulates biosynthesis of dolichol phosphate-mannose in mammalian cells: correct subcellular localization and stabilization of DPM1, and binding of dolichol phosphate.</title>
        <authorList>
            <person name="Maeda Y."/>
            <person name="Tomita S."/>
            <person name="Watanabe R."/>
            <person name="Ohishi K."/>
            <person name="Kinoshita T."/>
        </authorList>
    </citation>
    <scope>NUCLEOTIDE SEQUENCE [MRNA]</scope>
</reference>
<reference key="2">
    <citation type="journal article" date="2004" name="Genome Res.">
        <title>The status, quality, and expansion of the NIH full-length cDNA project: the Mammalian Gene Collection (MGC).</title>
        <authorList>
            <consortium name="The MGC Project Team"/>
        </authorList>
    </citation>
    <scope>NUCLEOTIDE SEQUENCE [LARGE SCALE MRNA]</scope>
    <source>
        <strain>129</strain>
        <tissue>Mammary gland</tissue>
    </source>
</reference>
<comment type="function">
    <text evidence="1">Regulates the biosynthesis of dolichol phosphate-mannose. Regulatory subunit of the dolichol-phosphate mannose (DPM) synthase complex; essential for the ER localization and stable expression of DPM1. Part of the glycosylphosphatidylinositol-N-acetylglucosaminyltransferase (GPI-GnT) complex that catalyzes the transfer of N-acetylglucosamine from UDP-N-acetylglucosamine to phosphatidylinositol and participates in the first step of GPI biosynthesis. May act by regulating the GPI-GNT complex.</text>
</comment>
<comment type="pathway">
    <text evidence="1">Protein modification; protein glycosylation.</text>
</comment>
<comment type="subunit">
    <text evidence="1">Component of the dolichol-phosphate mannose (DPM) synthase complex composed of DPM1, DPM2 and DPM3; in the complex interacts directly with DPM3. Component of the glycosylphosphatidylinositol-N-acetylglucosaminyltransferase (GPI-GnT) complex composed at least by PIGA, PIGC, PIGH, PIGP, PIGQ, PIGY and DPM2. Interacts with PIGA, PIGC and PIGQ.</text>
</comment>
<comment type="subcellular location">
    <subcellularLocation>
        <location>Endoplasmic reticulum membrane</location>
        <topology>Multi-pass membrane protein</topology>
    </subcellularLocation>
</comment>
<comment type="similarity">
    <text evidence="3">Belongs to the DPM2 family.</text>
</comment>
<protein>
    <recommendedName>
        <fullName evidence="3">Dolichol phosphate-mannose biosynthesis regulatory protein</fullName>
    </recommendedName>
    <alternativeName>
        <fullName>Dolichol-phosphate mannose synthase subunit 2</fullName>
        <shortName>DPM synthase subunit 2</shortName>
    </alternativeName>
</protein>
<dbReference type="EMBL" id="AB013360">
    <property type="protein sequence ID" value="BAA33973.1"/>
    <property type="molecule type" value="mRNA"/>
</dbReference>
<dbReference type="EMBL" id="BC008256">
    <property type="protein sequence ID" value="AAH08256.1"/>
    <property type="molecule type" value="mRNA"/>
</dbReference>
<dbReference type="CCDS" id="CCDS38104.1"/>
<dbReference type="RefSeq" id="NP_034203.1">
    <property type="nucleotide sequence ID" value="NM_010073.2"/>
</dbReference>
<dbReference type="SMR" id="Q9Z324"/>
<dbReference type="BioGRID" id="199299">
    <property type="interactions" value="1"/>
</dbReference>
<dbReference type="FunCoup" id="Q9Z324">
    <property type="interactions" value="778"/>
</dbReference>
<dbReference type="IntAct" id="Q9Z324">
    <property type="interactions" value="1"/>
</dbReference>
<dbReference type="MINT" id="Q9Z324"/>
<dbReference type="STRING" id="10090.ENSMUSP00000028151"/>
<dbReference type="PaxDb" id="10090-ENSMUSP00000028151"/>
<dbReference type="TopDownProteomics" id="Q9Z324"/>
<dbReference type="Antibodypedia" id="44831">
    <property type="antibodies" value="40 antibodies from 15 providers"/>
</dbReference>
<dbReference type="DNASU" id="13481"/>
<dbReference type="Ensembl" id="ENSMUST00000028151.7">
    <property type="protein sequence ID" value="ENSMUSP00000028151.7"/>
    <property type="gene ID" value="ENSMUSG00000026810.13"/>
</dbReference>
<dbReference type="GeneID" id="13481"/>
<dbReference type="KEGG" id="mmu:13481"/>
<dbReference type="UCSC" id="uc008jfu.1">
    <property type="organism name" value="mouse"/>
</dbReference>
<dbReference type="AGR" id="MGI:1330238"/>
<dbReference type="CTD" id="8818"/>
<dbReference type="MGI" id="MGI:1330238">
    <property type="gene designation" value="Dpm2"/>
</dbReference>
<dbReference type="VEuPathDB" id="HostDB:ENSMUSG00000026810"/>
<dbReference type="eggNOG" id="KOG3488">
    <property type="taxonomic scope" value="Eukaryota"/>
</dbReference>
<dbReference type="GeneTree" id="ENSGT00390000001098"/>
<dbReference type="HOGENOM" id="CLU_150144_2_1_1"/>
<dbReference type="InParanoid" id="Q9Z324"/>
<dbReference type="OMA" id="YTLWIIV"/>
<dbReference type="OrthoDB" id="92312at9989"/>
<dbReference type="PhylomeDB" id="Q9Z324"/>
<dbReference type="TreeFam" id="TF300257"/>
<dbReference type="Reactome" id="R-MMU-162699">
    <property type="pathway name" value="Synthesis of dolichyl-phosphate mannose"/>
</dbReference>
<dbReference type="Reactome" id="R-MMU-162710">
    <property type="pathway name" value="Synthesis of glycosylphosphatidylinositol (GPI)"/>
</dbReference>
<dbReference type="UniPathway" id="UPA00378"/>
<dbReference type="BioGRID-ORCS" id="13481">
    <property type="hits" value="15 hits in 84 CRISPR screens"/>
</dbReference>
<dbReference type="ChiTaRS" id="Dpm2">
    <property type="organism name" value="mouse"/>
</dbReference>
<dbReference type="PRO" id="PR:Q9Z324"/>
<dbReference type="Proteomes" id="UP000000589">
    <property type="component" value="Chromosome 2"/>
</dbReference>
<dbReference type="RNAct" id="Q9Z324">
    <property type="molecule type" value="protein"/>
</dbReference>
<dbReference type="Bgee" id="ENSMUSG00000026810">
    <property type="expression patterns" value="Expressed in embryonic brain and 268 other cell types or tissues"/>
</dbReference>
<dbReference type="ExpressionAtlas" id="Q9Z324">
    <property type="expression patterns" value="baseline and differential"/>
</dbReference>
<dbReference type="GO" id="GO:0033185">
    <property type="term" value="C:dolichol-phosphate-mannose synthase complex"/>
    <property type="evidence" value="ECO:0000266"/>
    <property type="project" value="MGI"/>
</dbReference>
<dbReference type="GO" id="GO:0005783">
    <property type="term" value="C:endoplasmic reticulum"/>
    <property type="evidence" value="ECO:0000266"/>
    <property type="project" value="MGI"/>
</dbReference>
<dbReference type="GO" id="GO:0000506">
    <property type="term" value="C:glycosylphosphatidylinositol-N-acetylglucosaminyltransferase (GPI-GnT) complex"/>
    <property type="evidence" value="ECO:0000250"/>
    <property type="project" value="UniProtKB"/>
</dbReference>
<dbReference type="GO" id="GO:0016020">
    <property type="term" value="C:membrane"/>
    <property type="evidence" value="ECO:0000255"/>
    <property type="project" value="MGI"/>
</dbReference>
<dbReference type="GO" id="GO:0004582">
    <property type="term" value="F:dolichyl-phosphate beta-D-mannosyltransferase activity"/>
    <property type="evidence" value="ECO:0000266"/>
    <property type="project" value="MGI"/>
</dbReference>
<dbReference type="GO" id="GO:0030234">
    <property type="term" value="F:enzyme regulator activity"/>
    <property type="evidence" value="ECO:0007669"/>
    <property type="project" value="InterPro"/>
</dbReference>
<dbReference type="GO" id="GO:0019348">
    <property type="term" value="P:dolichol metabolic process"/>
    <property type="evidence" value="ECO:0000266"/>
    <property type="project" value="MGI"/>
</dbReference>
<dbReference type="GO" id="GO:0180047">
    <property type="term" value="P:dolichol phosphate mannose biosynthetic process"/>
    <property type="evidence" value="ECO:0007669"/>
    <property type="project" value="InterPro"/>
</dbReference>
<dbReference type="GO" id="GO:0006506">
    <property type="term" value="P:GPI anchor biosynthetic process"/>
    <property type="evidence" value="ECO:0000250"/>
    <property type="project" value="UniProtKB"/>
</dbReference>
<dbReference type="GO" id="GO:0006486">
    <property type="term" value="P:protein glycosylation"/>
    <property type="evidence" value="ECO:0007669"/>
    <property type="project" value="UniProtKB-UniPathway"/>
</dbReference>
<dbReference type="InterPro" id="IPR009914">
    <property type="entry name" value="DPM2"/>
</dbReference>
<dbReference type="PANTHER" id="PTHR15039">
    <property type="entry name" value="DOLICHOL PHOSPHATE-MANNOSE BIOSYNTHESIS REGULATORY PROTEIN"/>
    <property type="match status" value="1"/>
</dbReference>
<dbReference type="PANTHER" id="PTHR15039:SF11">
    <property type="entry name" value="DOLICHOL PHOSPHATE-MANNOSE BIOSYNTHESIS REGULATORY PROTEIN"/>
    <property type="match status" value="1"/>
</dbReference>
<dbReference type="Pfam" id="PF07297">
    <property type="entry name" value="DPM2"/>
    <property type="match status" value="1"/>
</dbReference>
<keyword id="KW-0256">Endoplasmic reticulum</keyword>
<keyword id="KW-0472">Membrane</keyword>
<keyword id="KW-1185">Reference proteome</keyword>
<keyword id="KW-0812">Transmembrane</keyword>
<keyword id="KW-1133">Transmembrane helix</keyword>
<name>DPM2_MOUSE</name>
<sequence length="84" mass="9376">MATGTDQAVGFGLVAVSLIIFTYYTTWVILLPFIDSQHVIHKYFLPRAYAVLLPLAAGLLLLLFVGLFITYVMLKSQKITKKAQ</sequence>
<feature type="chain" id="PRO_0000220874" description="Dolichol phosphate-mannose biosynthesis regulatory protein">
    <location>
        <begin position="1"/>
        <end position="84"/>
    </location>
</feature>
<feature type="transmembrane region" description="Helical" evidence="2">
    <location>
        <begin position="11"/>
        <end position="31"/>
    </location>
</feature>
<feature type="transmembrane region" description="Helical" evidence="2">
    <location>
        <begin position="49"/>
        <end position="69"/>
    </location>
</feature>
<accession>Q9Z324</accession>
<proteinExistence type="inferred from homology"/>
<gene>
    <name evidence="4" type="primary">Dpm2</name>
</gene>
<evidence type="ECO:0000250" key="1">
    <source>
        <dbReference type="UniProtKB" id="O94777"/>
    </source>
</evidence>
<evidence type="ECO:0000255" key="2"/>
<evidence type="ECO:0000305" key="3"/>
<evidence type="ECO:0000312" key="4">
    <source>
        <dbReference type="MGI" id="MGI:1330238"/>
    </source>
</evidence>
<organism>
    <name type="scientific">Mus musculus</name>
    <name type="common">Mouse</name>
    <dbReference type="NCBI Taxonomy" id="10090"/>
    <lineage>
        <taxon>Eukaryota</taxon>
        <taxon>Metazoa</taxon>
        <taxon>Chordata</taxon>
        <taxon>Craniata</taxon>
        <taxon>Vertebrata</taxon>
        <taxon>Euteleostomi</taxon>
        <taxon>Mammalia</taxon>
        <taxon>Eutheria</taxon>
        <taxon>Euarchontoglires</taxon>
        <taxon>Glires</taxon>
        <taxon>Rodentia</taxon>
        <taxon>Myomorpha</taxon>
        <taxon>Muroidea</taxon>
        <taxon>Muridae</taxon>
        <taxon>Murinae</taxon>
        <taxon>Mus</taxon>
        <taxon>Mus</taxon>
    </lineage>
</organism>